<comment type="catalytic activity">
    <reaction evidence="1">
        <text>tRNA(Phe) + L-phenylalanine + ATP = L-phenylalanyl-tRNA(Phe) + AMP + diphosphate + H(+)</text>
        <dbReference type="Rhea" id="RHEA:19413"/>
        <dbReference type="Rhea" id="RHEA-COMP:9668"/>
        <dbReference type="Rhea" id="RHEA-COMP:9699"/>
        <dbReference type="ChEBI" id="CHEBI:15378"/>
        <dbReference type="ChEBI" id="CHEBI:30616"/>
        <dbReference type="ChEBI" id="CHEBI:33019"/>
        <dbReference type="ChEBI" id="CHEBI:58095"/>
        <dbReference type="ChEBI" id="CHEBI:78442"/>
        <dbReference type="ChEBI" id="CHEBI:78531"/>
        <dbReference type="ChEBI" id="CHEBI:456215"/>
        <dbReference type="EC" id="6.1.1.20"/>
    </reaction>
</comment>
<comment type="cofactor">
    <cofactor evidence="1">
        <name>Mg(2+)</name>
        <dbReference type="ChEBI" id="CHEBI:18420"/>
    </cofactor>
    <text evidence="1">Binds 2 magnesium ions per tetramer.</text>
</comment>
<comment type="subunit">
    <text evidence="1">Tetramer of two alpha and two beta subunits.</text>
</comment>
<comment type="subcellular location">
    <subcellularLocation>
        <location evidence="1">Cytoplasm</location>
    </subcellularLocation>
</comment>
<comment type="similarity">
    <text evidence="1">Belongs to the class-II aminoacyl-tRNA synthetase family. Phe-tRNA synthetase alpha subunit type 1 subfamily.</text>
</comment>
<evidence type="ECO:0000255" key="1">
    <source>
        <dbReference type="HAMAP-Rule" id="MF_00281"/>
    </source>
</evidence>
<organism>
    <name type="scientific">Streptococcus pneumoniae serotype 4 (strain ATCC BAA-334 / TIGR4)</name>
    <dbReference type="NCBI Taxonomy" id="170187"/>
    <lineage>
        <taxon>Bacteria</taxon>
        <taxon>Bacillati</taxon>
        <taxon>Bacillota</taxon>
        <taxon>Bacilli</taxon>
        <taxon>Lactobacillales</taxon>
        <taxon>Streptococcaceae</taxon>
        <taxon>Streptococcus</taxon>
    </lineage>
</organism>
<sequence length="348" mass="39102">MSTIEEQLKALREETLASLKQITAGNEKEMQDLRVSVLGKKGSLTEILKGMKDVSAEMRPIIGKHVNEARDVLTAAFEETAKLLEEKKVAAQLASESIDVTLPGRPVATGHRHVLTQTSEEIEDIFIGMGYQVVDGFEVEQDYYNFERMNLPKDHPARDMQDTFYITEEILLRTHTSPVQARAMDAHDFSKGPLKMISPGRVFRRDTDDATHSHQFHQIEGLVVGKNISMADLQGTLQLIVQKMFGEERQIRLRPSYFPFTEPSVEVDVSCFKCGGEGCNVCKKTGWIEIMGAGMVHPRVLEMSGIDATVYSGFAFGLGQERVAMLRYGINDIRGFYQGDVRFSEQFK</sequence>
<proteinExistence type="inferred from homology"/>
<accession>Q97S36</accession>
<keyword id="KW-0030">Aminoacyl-tRNA synthetase</keyword>
<keyword id="KW-0067">ATP-binding</keyword>
<keyword id="KW-0963">Cytoplasm</keyword>
<keyword id="KW-0436">Ligase</keyword>
<keyword id="KW-0460">Magnesium</keyword>
<keyword id="KW-0479">Metal-binding</keyword>
<keyword id="KW-0547">Nucleotide-binding</keyword>
<keyword id="KW-0648">Protein biosynthesis</keyword>
<keyword id="KW-1185">Reference proteome</keyword>
<gene>
    <name evidence="1" type="primary">pheS</name>
    <name type="ordered locus">SP_0579</name>
</gene>
<dbReference type="EC" id="6.1.1.20" evidence="1"/>
<dbReference type="EMBL" id="AE005672">
    <property type="protein sequence ID" value="AAK74733.1"/>
    <property type="molecule type" value="Genomic_DNA"/>
</dbReference>
<dbReference type="PIR" id="D95067">
    <property type="entry name" value="D95067"/>
</dbReference>
<dbReference type="RefSeq" id="WP_001818763.1">
    <property type="nucleotide sequence ID" value="NZ_CP155539.1"/>
</dbReference>
<dbReference type="SMR" id="Q97S36"/>
<dbReference type="BindingDB" id="Q97S36"/>
<dbReference type="ChEMBL" id="CHEMBL5039"/>
<dbReference type="PaxDb" id="170187-SP_0579"/>
<dbReference type="EnsemblBacteria" id="AAK74733">
    <property type="protein sequence ID" value="AAK74733"/>
    <property type="gene ID" value="SP_0579"/>
</dbReference>
<dbReference type="GeneID" id="45217940"/>
<dbReference type="KEGG" id="spn:SP_0579"/>
<dbReference type="eggNOG" id="COG0016">
    <property type="taxonomic scope" value="Bacteria"/>
</dbReference>
<dbReference type="PhylomeDB" id="Q97S36"/>
<dbReference type="BioCyc" id="SPNE170187:G1FZB-598-MONOMER"/>
<dbReference type="Proteomes" id="UP000000585">
    <property type="component" value="Chromosome"/>
</dbReference>
<dbReference type="GO" id="GO:0005737">
    <property type="term" value="C:cytoplasm"/>
    <property type="evidence" value="ECO:0007669"/>
    <property type="project" value="UniProtKB-SubCell"/>
</dbReference>
<dbReference type="GO" id="GO:0005524">
    <property type="term" value="F:ATP binding"/>
    <property type="evidence" value="ECO:0007669"/>
    <property type="project" value="UniProtKB-UniRule"/>
</dbReference>
<dbReference type="GO" id="GO:0140096">
    <property type="term" value="F:catalytic activity, acting on a protein"/>
    <property type="evidence" value="ECO:0007669"/>
    <property type="project" value="UniProtKB-ARBA"/>
</dbReference>
<dbReference type="GO" id="GO:0000287">
    <property type="term" value="F:magnesium ion binding"/>
    <property type="evidence" value="ECO:0007669"/>
    <property type="project" value="UniProtKB-UniRule"/>
</dbReference>
<dbReference type="GO" id="GO:0004826">
    <property type="term" value="F:phenylalanine-tRNA ligase activity"/>
    <property type="evidence" value="ECO:0007669"/>
    <property type="project" value="UniProtKB-UniRule"/>
</dbReference>
<dbReference type="GO" id="GO:0016740">
    <property type="term" value="F:transferase activity"/>
    <property type="evidence" value="ECO:0007669"/>
    <property type="project" value="UniProtKB-ARBA"/>
</dbReference>
<dbReference type="GO" id="GO:0000049">
    <property type="term" value="F:tRNA binding"/>
    <property type="evidence" value="ECO:0007669"/>
    <property type="project" value="InterPro"/>
</dbReference>
<dbReference type="GO" id="GO:0006432">
    <property type="term" value="P:phenylalanyl-tRNA aminoacylation"/>
    <property type="evidence" value="ECO:0007669"/>
    <property type="project" value="UniProtKB-UniRule"/>
</dbReference>
<dbReference type="CDD" id="cd00496">
    <property type="entry name" value="PheRS_alpha_core"/>
    <property type="match status" value="1"/>
</dbReference>
<dbReference type="FunFam" id="3.30.930.10:FF:000003">
    <property type="entry name" value="Phenylalanine--tRNA ligase alpha subunit"/>
    <property type="match status" value="1"/>
</dbReference>
<dbReference type="Gene3D" id="3.30.930.10">
    <property type="entry name" value="Bira Bifunctional Protein, Domain 2"/>
    <property type="match status" value="1"/>
</dbReference>
<dbReference type="HAMAP" id="MF_00281">
    <property type="entry name" value="Phe_tRNA_synth_alpha1"/>
    <property type="match status" value="1"/>
</dbReference>
<dbReference type="InterPro" id="IPR006195">
    <property type="entry name" value="aa-tRNA-synth_II"/>
</dbReference>
<dbReference type="InterPro" id="IPR045864">
    <property type="entry name" value="aa-tRNA-synth_II/BPL/LPL"/>
</dbReference>
<dbReference type="InterPro" id="IPR004529">
    <property type="entry name" value="Phe-tRNA-synth_IIc_asu"/>
</dbReference>
<dbReference type="InterPro" id="IPR004188">
    <property type="entry name" value="Phe-tRNA_ligase_II_N"/>
</dbReference>
<dbReference type="InterPro" id="IPR022911">
    <property type="entry name" value="Phe_tRNA_ligase_alpha1_bac"/>
</dbReference>
<dbReference type="InterPro" id="IPR002319">
    <property type="entry name" value="Phenylalanyl-tRNA_Synthase"/>
</dbReference>
<dbReference type="InterPro" id="IPR010978">
    <property type="entry name" value="tRNA-bd_arm"/>
</dbReference>
<dbReference type="NCBIfam" id="TIGR00468">
    <property type="entry name" value="pheS"/>
    <property type="match status" value="1"/>
</dbReference>
<dbReference type="PANTHER" id="PTHR11538:SF41">
    <property type="entry name" value="PHENYLALANINE--TRNA LIGASE, MITOCHONDRIAL"/>
    <property type="match status" value="1"/>
</dbReference>
<dbReference type="PANTHER" id="PTHR11538">
    <property type="entry name" value="PHENYLALANYL-TRNA SYNTHETASE"/>
    <property type="match status" value="1"/>
</dbReference>
<dbReference type="Pfam" id="PF02912">
    <property type="entry name" value="Phe_tRNA-synt_N"/>
    <property type="match status" value="1"/>
</dbReference>
<dbReference type="Pfam" id="PF01409">
    <property type="entry name" value="tRNA-synt_2d"/>
    <property type="match status" value="1"/>
</dbReference>
<dbReference type="SUPFAM" id="SSF55681">
    <property type="entry name" value="Class II aaRS and biotin synthetases"/>
    <property type="match status" value="1"/>
</dbReference>
<dbReference type="SUPFAM" id="SSF46589">
    <property type="entry name" value="tRNA-binding arm"/>
    <property type="match status" value="1"/>
</dbReference>
<dbReference type="PROSITE" id="PS50862">
    <property type="entry name" value="AA_TRNA_LIGASE_II"/>
    <property type="match status" value="1"/>
</dbReference>
<protein>
    <recommendedName>
        <fullName evidence="1">Phenylalanine--tRNA ligase alpha subunit</fullName>
        <ecNumber evidence="1">6.1.1.20</ecNumber>
    </recommendedName>
    <alternativeName>
        <fullName evidence="1">Phenylalanyl-tRNA synthetase alpha subunit</fullName>
        <shortName evidence="1">PheRS</shortName>
    </alternativeName>
</protein>
<reference key="1">
    <citation type="journal article" date="2001" name="Science">
        <title>Complete genome sequence of a virulent isolate of Streptococcus pneumoniae.</title>
        <authorList>
            <person name="Tettelin H."/>
            <person name="Nelson K.E."/>
            <person name="Paulsen I.T."/>
            <person name="Eisen J.A."/>
            <person name="Read T.D."/>
            <person name="Peterson S.N."/>
            <person name="Heidelberg J.F."/>
            <person name="DeBoy R.T."/>
            <person name="Haft D.H."/>
            <person name="Dodson R.J."/>
            <person name="Durkin A.S."/>
            <person name="Gwinn M.L."/>
            <person name="Kolonay J.F."/>
            <person name="Nelson W.C."/>
            <person name="Peterson J.D."/>
            <person name="Umayam L.A."/>
            <person name="White O."/>
            <person name="Salzberg S.L."/>
            <person name="Lewis M.R."/>
            <person name="Radune D."/>
            <person name="Holtzapple E.K."/>
            <person name="Khouri H.M."/>
            <person name="Wolf A.M."/>
            <person name="Utterback T.R."/>
            <person name="Hansen C.L."/>
            <person name="McDonald L.A."/>
            <person name="Feldblyum T.V."/>
            <person name="Angiuoli S.V."/>
            <person name="Dickinson T."/>
            <person name="Hickey E.K."/>
            <person name="Holt I.E."/>
            <person name="Loftus B.J."/>
            <person name="Yang F."/>
            <person name="Smith H.O."/>
            <person name="Venter J.C."/>
            <person name="Dougherty B.A."/>
            <person name="Morrison D.A."/>
            <person name="Hollingshead S.K."/>
            <person name="Fraser C.M."/>
        </authorList>
    </citation>
    <scope>NUCLEOTIDE SEQUENCE [LARGE SCALE GENOMIC DNA]</scope>
    <source>
        <strain>ATCC BAA-334 / TIGR4</strain>
    </source>
</reference>
<name>SYFA_STRPN</name>
<feature type="chain" id="PRO_0000126773" description="Phenylalanine--tRNA ligase alpha subunit">
    <location>
        <begin position="1"/>
        <end position="348"/>
    </location>
</feature>
<feature type="binding site" evidence="1">
    <location>
        <position position="262"/>
    </location>
    <ligand>
        <name>Mg(2+)</name>
        <dbReference type="ChEBI" id="CHEBI:18420"/>
        <note>shared with beta subunit</note>
    </ligand>
</feature>